<sequence>MSDPTQKIAVLGAGSWGTALAALVARHGHPTVLWGRDAAMVDAIDRTHENPRYLPGIALPDSLRATTDLQQTIAGASWILVVVPSHAFTETIKLLAPLRPAGAGIAWATKGFEPGSGRFLHEVARDILGPSVPLAVVTGPSFAKEVTLGLPTAITVHGDDAAFAQVVADAMHGPTFRAYTGDDMVGAELGGAMKNVLAVATGVADGMQLGLNARAGLITRGLNEMLRLAAVIGARPETLMGLAGLGDLVLTCTGDLSRNRRLGLALGRGQSLSDAIREIGQVVESVQTADEVMRQAEQHGIELPISNAVRAVLHGEITPEAGLKELLARERKPEYPQTLFT</sequence>
<reference key="1">
    <citation type="journal article" date="2005" name="Genome Res.">
        <title>Comparative and functional genomic analyses of the pathogenicity of phytopathogen Xanthomonas campestris pv. campestris.</title>
        <authorList>
            <person name="Qian W."/>
            <person name="Jia Y."/>
            <person name="Ren S.-X."/>
            <person name="He Y.-Q."/>
            <person name="Feng J.-X."/>
            <person name="Lu L.-F."/>
            <person name="Sun Q."/>
            <person name="Ying G."/>
            <person name="Tang D.-J."/>
            <person name="Tang H."/>
            <person name="Wu W."/>
            <person name="Hao P."/>
            <person name="Wang L."/>
            <person name="Jiang B.-L."/>
            <person name="Zeng S."/>
            <person name="Gu W.-Y."/>
            <person name="Lu G."/>
            <person name="Rong L."/>
            <person name="Tian Y."/>
            <person name="Yao Z."/>
            <person name="Fu G."/>
            <person name="Chen B."/>
            <person name="Fang R."/>
            <person name="Qiang B."/>
            <person name="Chen Z."/>
            <person name="Zhao G.-P."/>
            <person name="Tang J.-L."/>
            <person name="He C."/>
        </authorList>
    </citation>
    <scope>NUCLEOTIDE SEQUENCE [LARGE SCALE GENOMIC DNA]</scope>
    <source>
        <strain>8004</strain>
    </source>
</reference>
<gene>
    <name evidence="1" type="primary">gpsA</name>
    <name type="ordered locus">XC_0214</name>
</gene>
<protein>
    <recommendedName>
        <fullName evidence="1">Glycerol-3-phosphate dehydrogenase [NAD(P)+]</fullName>
        <ecNumber evidence="1">1.1.1.94</ecNumber>
    </recommendedName>
    <alternativeName>
        <fullName evidence="1">NAD(P)(+)-dependent glycerol-3-phosphate dehydrogenase</fullName>
    </alternativeName>
    <alternativeName>
        <fullName evidence="1">NAD(P)H-dependent dihydroxyacetone-phosphate reductase</fullName>
    </alternativeName>
</protein>
<evidence type="ECO:0000255" key="1">
    <source>
        <dbReference type="HAMAP-Rule" id="MF_00394"/>
    </source>
</evidence>
<organism>
    <name type="scientific">Xanthomonas campestris pv. campestris (strain 8004)</name>
    <dbReference type="NCBI Taxonomy" id="314565"/>
    <lineage>
        <taxon>Bacteria</taxon>
        <taxon>Pseudomonadati</taxon>
        <taxon>Pseudomonadota</taxon>
        <taxon>Gammaproteobacteria</taxon>
        <taxon>Lysobacterales</taxon>
        <taxon>Lysobacteraceae</taxon>
        <taxon>Xanthomonas</taxon>
    </lineage>
</organism>
<proteinExistence type="inferred from homology"/>
<comment type="function">
    <text evidence="1">Catalyzes the reduction of the glycolytic intermediate dihydroxyacetone phosphate (DHAP) to sn-glycerol 3-phosphate (G3P), the key precursor for phospholipid synthesis.</text>
</comment>
<comment type="catalytic activity">
    <reaction evidence="1">
        <text>sn-glycerol 3-phosphate + NAD(+) = dihydroxyacetone phosphate + NADH + H(+)</text>
        <dbReference type="Rhea" id="RHEA:11092"/>
        <dbReference type="ChEBI" id="CHEBI:15378"/>
        <dbReference type="ChEBI" id="CHEBI:57540"/>
        <dbReference type="ChEBI" id="CHEBI:57597"/>
        <dbReference type="ChEBI" id="CHEBI:57642"/>
        <dbReference type="ChEBI" id="CHEBI:57945"/>
        <dbReference type="EC" id="1.1.1.94"/>
    </reaction>
    <physiologicalReaction direction="right-to-left" evidence="1">
        <dbReference type="Rhea" id="RHEA:11094"/>
    </physiologicalReaction>
</comment>
<comment type="catalytic activity">
    <reaction evidence="1">
        <text>sn-glycerol 3-phosphate + NADP(+) = dihydroxyacetone phosphate + NADPH + H(+)</text>
        <dbReference type="Rhea" id="RHEA:11096"/>
        <dbReference type="ChEBI" id="CHEBI:15378"/>
        <dbReference type="ChEBI" id="CHEBI:57597"/>
        <dbReference type="ChEBI" id="CHEBI:57642"/>
        <dbReference type="ChEBI" id="CHEBI:57783"/>
        <dbReference type="ChEBI" id="CHEBI:58349"/>
        <dbReference type="EC" id="1.1.1.94"/>
    </reaction>
    <physiologicalReaction direction="right-to-left" evidence="1">
        <dbReference type="Rhea" id="RHEA:11098"/>
    </physiologicalReaction>
</comment>
<comment type="pathway">
    <text evidence="1">Membrane lipid metabolism; glycerophospholipid metabolism.</text>
</comment>
<comment type="subcellular location">
    <subcellularLocation>
        <location evidence="1">Cytoplasm</location>
    </subcellularLocation>
</comment>
<comment type="similarity">
    <text evidence="1">Belongs to the NAD-dependent glycerol-3-phosphate dehydrogenase family.</text>
</comment>
<name>GPDA_XANC8</name>
<accession>Q4V072</accession>
<keyword id="KW-0963">Cytoplasm</keyword>
<keyword id="KW-0444">Lipid biosynthesis</keyword>
<keyword id="KW-0443">Lipid metabolism</keyword>
<keyword id="KW-0520">NAD</keyword>
<keyword id="KW-0521">NADP</keyword>
<keyword id="KW-0547">Nucleotide-binding</keyword>
<keyword id="KW-0560">Oxidoreductase</keyword>
<keyword id="KW-0594">Phospholipid biosynthesis</keyword>
<keyword id="KW-1208">Phospholipid metabolism</keyword>
<feature type="chain" id="PRO_0000255396" description="Glycerol-3-phosphate dehydrogenase [NAD(P)+]">
    <location>
        <begin position="1"/>
        <end position="341"/>
    </location>
</feature>
<feature type="active site" description="Proton acceptor" evidence="1">
    <location>
        <position position="194"/>
    </location>
</feature>
<feature type="binding site" evidence="1">
    <location>
        <position position="15"/>
    </location>
    <ligand>
        <name>NADPH</name>
        <dbReference type="ChEBI" id="CHEBI:57783"/>
    </ligand>
</feature>
<feature type="binding site" evidence="1">
    <location>
        <position position="16"/>
    </location>
    <ligand>
        <name>NADPH</name>
        <dbReference type="ChEBI" id="CHEBI:57783"/>
    </ligand>
</feature>
<feature type="binding site" evidence="1">
    <location>
        <position position="36"/>
    </location>
    <ligand>
        <name>NADPH</name>
        <dbReference type="ChEBI" id="CHEBI:57783"/>
    </ligand>
</feature>
<feature type="binding site" evidence="1">
    <location>
        <position position="110"/>
    </location>
    <ligand>
        <name>NADPH</name>
        <dbReference type="ChEBI" id="CHEBI:57783"/>
    </ligand>
</feature>
<feature type="binding site" evidence="1">
    <location>
        <position position="110"/>
    </location>
    <ligand>
        <name>sn-glycerol 3-phosphate</name>
        <dbReference type="ChEBI" id="CHEBI:57597"/>
    </ligand>
</feature>
<feature type="binding site" evidence="1">
    <location>
        <position position="139"/>
    </location>
    <ligand>
        <name>sn-glycerol 3-phosphate</name>
        <dbReference type="ChEBI" id="CHEBI:57597"/>
    </ligand>
</feature>
<feature type="binding site" evidence="1">
    <location>
        <position position="141"/>
    </location>
    <ligand>
        <name>sn-glycerol 3-phosphate</name>
        <dbReference type="ChEBI" id="CHEBI:57597"/>
    </ligand>
</feature>
<feature type="binding site" evidence="1">
    <location>
        <position position="143"/>
    </location>
    <ligand>
        <name>NADPH</name>
        <dbReference type="ChEBI" id="CHEBI:57783"/>
    </ligand>
</feature>
<feature type="binding site" evidence="1">
    <location>
        <position position="194"/>
    </location>
    <ligand>
        <name>sn-glycerol 3-phosphate</name>
        <dbReference type="ChEBI" id="CHEBI:57597"/>
    </ligand>
</feature>
<feature type="binding site" evidence="1">
    <location>
        <position position="247"/>
    </location>
    <ligand>
        <name>sn-glycerol 3-phosphate</name>
        <dbReference type="ChEBI" id="CHEBI:57597"/>
    </ligand>
</feature>
<feature type="binding site" evidence="1">
    <location>
        <position position="257"/>
    </location>
    <ligand>
        <name>sn-glycerol 3-phosphate</name>
        <dbReference type="ChEBI" id="CHEBI:57597"/>
    </ligand>
</feature>
<feature type="binding site" evidence="1">
    <location>
        <position position="258"/>
    </location>
    <ligand>
        <name>NADPH</name>
        <dbReference type="ChEBI" id="CHEBI:57783"/>
    </ligand>
</feature>
<feature type="binding site" evidence="1">
    <location>
        <position position="258"/>
    </location>
    <ligand>
        <name>sn-glycerol 3-phosphate</name>
        <dbReference type="ChEBI" id="CHEBI:57597"/>
    </ligand>
</feature>
<feature type="binding site" evidence="1">
    <location>
        <position position="259"/>
    </location>
    <ligand>
        <name>sn-glycerol 3-phosphate</name>
        <dbReference type="ChEBI" id="CHEBI:57597"/>
    </ligand>
</feature>
<feature type="binding site" evidence="1">
    <location>
        <position position="282"/>
    </location>
    <ligand>
        <name>NADPH</name>
        <dbReference type="ChEBI" id="CHEBI:57783"/>
    </ligand>
</feature>
<feature type="binding site" evidence="1">
    <location>
        <position position="284"/>
    </location>
    <ligand>
        <name>NADPH</name>
        <dbReference type="ChEBI" id="CHEBI:57783"/>
    </ligand>
</feature>
<dbReference type="EC" id="1.1.1.94" evidence="1"/>
<dbReference type="EMBL" id="CP000050">
    <property type="protein sequence ID" value="AAY47301.1"/>
    <property type="molecule type" value="Genomic_DNA"/>
</dbReference>
<dbReference type="RefSeq" id="WP_011035460.1">
    <property type="nucleotide sequence ID" value="NZ_CP155948.1"/>
</dbReference>
<dbReference type="SMR" id="Q4V072"/>
<dbReference type="KEGG" id="xcb:XC_0214"/>
<dbReference type="HOGENOM" id="CLU_033449_0_2_6"/>
<dbReference type="UniPathway" id="UPA00940"/>
<dbReference type="Proteomes" id="UP000000420">
    <property type="component" value="Chromosome"/>
</dbReference>
<dbReference type="GO" id="GO:0005829">
    <property type="term" value="C:cytosol"/>
    <property type="evidence" value="ECO:0007669"/>
    <property type="project" value="TreeGrafter"/>
</dbReference>
<dbReference type="GO" id="GO:0047952">
    <property type="term" value="F:glycerol-3-phosphate dehydrogenase [NAD(P)+] activity"/>
    <property type="evidence" value="ECO:0007669"/>
    <property type="project" value="UniProtKB-UniRule"/>
</dbReference>
<dbReference type="GO" id="GO:0051287">
    <property type="term" value="F:NAD binding"/>
    <property type="evidence" value="ECO:0007669"/>
    <property type="project" value="InterPro"/>
</dbReference>
<dbReference type="GO" id="GO:0005975">
    <property type="term" value="P:carbohydrate metabolic process"/>
    <property type="evidence" value="ECO:0007669"/>
    <property type="project" value="InterPro"/>
</dbReference>
<dbReference type="GO" id="GO:0046167">
    <property type="term" value="P:glycerol-3-phosphate biosynthetic process"/>
    <property type="evidence" value="ECO:0007669"/>
    <property type="project" value="UniProtKB-UniRule"/>
</dbReference>
<dbReference type="GO" id="GO:0046168">
    <property type="term" value="P:glycerol-3-phosphate catabolic process"/>
    <property type="evidence" value="ECO:0007669"/>
    <property type="project" value="InterPro"/>
</dbReference>
<dbReference type="GO" id="GO:0046474">
    <property type="term" value="P:glycerophospholipid biosynthetic process"/>
    <property type="evidence" value="ECO:0007669"/>
    <property type="project" value="TreeGrafter"/>
</dbReference>
<dbReference type="FunFam" id="1.10.1040.10:FF:000001">
    <property type="entry name" value="Glycerol-3-phosphate dehydrogenase [NAD(P)+]"/>
    <property type="match status" value="1"/>
</dbReference>
<dbReference type="FunFam" id="3.40.50.720:FF:000019">
    <property type="entry name" value="Glycerol-3-phosphate dehydrogenase [NAD(P)+]"/>
    <property type="match status" value="1"/>
</dbReference>
<dbReference type="Gene3D" id="1.10.1040.10">
    <property type="entry name" value="N-(1-d-carboxylethyl)-l-norvaline Dehydrogenase, domain 2"/>
    <property type="match status" value="1"/>
</dbReference>
<dbReference type="Gene3D" id="3.40.50.720">
    <property type="entry name" value="NAD(P)-binding Rossmann-like Domain"/>
    <property type="match status" value="1"/>
</dbReference>
<dbReference type="HAMAP" id="MF_00394">
    <property type="entry name" value="NAD_Glyc3P_dehydrog"/>
    <property type="match status" value="1"/>
</dbReference>
<dbReference type="InterPro" id="IPR008927">
    <property type="entry name" value="6-PGluconate_DH-like_C_sf"/>
</dbReference>
<dbReference type="InterPro" id="IPR013328">
    <property type="entry name" value="6PGD_dom2"/>
</dbReference>
<dbReference type="InterPro" id="IPR006168">
    <property type="entry name" value="G3P_DH_NAD-dep"/>
</dbReference>
<dbReference type="InterPro" id="IPR006109">
    <property type="entry name" value="G3P_DH_NAD-dep_C"/>
</dbReference>
<dbReference type="InterPro" id="IPR011128">
    <property type="entry name" value="G3P_DH_NAD-dep_N"/>
</dbReference>
<dbReference type="InterPro" id="IPR036291">
    <property type="entry name" value="NAD(P)-bd_dom_sf"/>
</dbReference>
<dbReference type="NCBIfam" id="NF000940">
    <property type="entry name" value="PRK00094.1-2"/>
    <property type="match status" value="1"/>
</dbReference>
<dbReference type="NCBIfam" id="NF000942">
    <property type="entry name" value="PRK00094.1-4"/>
    <property type="match status" value="1"/>
</dbReference>
<dbReference type="PANTHER" id="PTHR11728">
    <property type="entry name" value="GLYCEROL-3-PHOSPHATE DEHYDROGENASE"/>
    <property type="match status" value="1"/>
</dbReference>
<dbReference type="PANTHER" id="PTHR11728:SF1">
    <property type="entry name" value="GLYCEROL-3-PHOSPHATE DEHYDROGENASE [NAD(+)] 2, CHLOROPLASTIC"/>
    <property type="match status" value="1"/>
</dbReference>
<dbReference type="Pfam" id="PF07479">
    <property type="entry name" value="NAD_Gly3P_dh_C"/>
    <property type="match status" value="1"/>
</dbReference>
<dbReference type="Pfam" id="PF01210">
    <property type="entry name" value="NAD_Gly3P_dh_N"/>
    <property type="match status" value="1"/>
</dbReference>
<dbReference type="PIRSF" id="PIRSF000114">
    <property type="entry name" value="Glycerol-3-P_dh"/>
    <property type="match status" value="1"/>
</dbReference>
<dbReference type="PRINTS" id="PR00077">
    <property type="entry name" value="GPDHDRGNASE"/>
</dbReference>
<dbReference type="SUPFAM" id="SSF48179">
    <property type="entry name" value="6-phosphogluconate dehydrogenase C-terminal domain-like"/>
    <property type="match status" value="1"/>
</dbReference>
<dbReference type="SUPFAM" id="SSF51735">
    <property type="entry name" value="NAD(P)-binding Rossmann-fold domains"/>
    <property type="match status" value="1"/>
</dbReference>
<dbReference type="PROSITE" id="PS00957">
    <property type="entry name" value="NAD_G3PDH"/>
    <property type="match status" value="1"/>
</dbReference>